<protein>
    <recommendedName>
        <fullName>Cobalamin import ATP-binding protein BtuD</fullName>
        <ecNumber>7.6.2.8</ecNumber>
    </recommendedName>
    <alternativeName>
        <fullName>Vitamin B12-transporting ATPase</fullName>
    </alternativeName>
</protein>
<feature type="chain" id="PRO_0000408969" description="Cobalamin import ATP-binding protein BtuD">
    <location>
        <begin position="1"/>
        <end position="398"/>
    </location>
</feature>
<feature type="domain" description="ABC transporter" evidence="2">
    <location>
        <begin position="3"/>
        <end position="237"/>
    </location>
</feature>
<feature type="binding site" evidence="2">
    <location>
        <begin position="35"/>
        <end position="42"/>
    </location>
    <ligand>
        <name>ATP</name>
        <dbReference type="ChEBI" id="CHEBI:30616"/>
    </ligand>
</feature>
<accession>Q9HQ18</accession>
<reference key="1">
    <citation type="journal article" date="2000" name="Proc. Natl. Acad. Sci. U.S.A.">
        <title>Genome sequence of Halobacterium species NRC-1.</title>
        <authorList>
            <person name="Ng W.V."/>
            <person name="Kennedy S.P."/>
            <person name="Mahairas G.G."/>
            <person name="Berquist B."/>
            <person name="Pan M."/>
            <person name="Shukla H.D."/>
            <person name="Lasky S.R."/>
            <person name="Baliga N.S."/>
            <person name="Thorsson V."/>
            <person name="Sbrogna J."/>
            <person name="Swartzell S."/>
            <person name="Weir D."/>
            <person name="Hall J."/>
            <person name="Dahl T.A."/>
            <person name="Welti R."/>
            <person name="Goo Y.A."/>
            <person name="Leithauser B."/>
            <person name="Keller K."/>
            <person name="Cruz R."/>
            <person name="Danson M.J."/>
            <person name="Hough D.W."/>
            <person name="Maddocks D.G."/>
            <person name="Jablonski P.E."/>
            <person name="Krebs M.P."/>
            <person name="Angevine C.M."/>
            <person name="Dale H."/>
            <person name="Isenbarger T.A."/>
            <person name="Peck R.F."/>
            <person name="Pohlschroder M."/>
            <person name="Spudich J.L."/>
            <person name="Jung K.-H."/>
            <person name="Alam M."/>
            <person name="Freitas T."/>
            <person name="Hou S."/>
            <person name="Daniels C.J."/>
            <person name="Dennis P.P."/>
            <person name="Omer A.D."/>
            <person name="Ebhardt H."/>
            <person name="Lowe T.M."/>
            <person name="Liang P."/>
            <person name="Riley M."/>
            <person name="Hood L."/>
            <person name="DasSarma S."/>
        </authorList>
    </citation>
    <scope>NUCLEOTIDE SEQUENCE [LARGE SCALE GENOMIC DNA]</scope>
    <source>
        <strain>ATCC 700922 / JCM 11081 / NRC-1</strain>
    </source>
</reference>
<reference key="2">
    <citation type="journal article" date="2005" name="J. Bacteriol.">
        <title>ABC transporter for corrinoids in Halobacterium sp. strain NRC-1.</title>
        <authorList>
            <person name="Woodson J.D."/>
            <person name="Reynolds A.A."/>
            <person name="Escalante-Semerena J.C."/>
        </authorList>
    </citation>
    <scope>FUNCTION IN CORRINOID UTILIZATION</scope>
    <source>
        <strain>ATCC 700922 / JCM 11081 / NRC-1</strain>
    </source>
</reference>
<keyword id="KW-0067">ATP-binding</keyword>
<keyword id="KW-1003">Cell membrane</keyword>
<keyword id="KW-0472">Membrane</keyword>
<keyword id="KW-0547">Nucleotide-binding</keyword>
<keyword id="KW-1185">Reference proteome</keyword>
<keyword id="KW-1278">Translocase</keyword>
<keyword id="KW-0813">Transport</keyword>
<gene>
    <name type="primary">btuD</name>
    <name type="synonym">hemV2</name>
    <name type="ordered locus">VNG_1371G</name>
</gene>
<organism>
    <name type="scientific">Halobacterium salinarum (strain ATCC 700922 / JCM 11081 / NRC-1)</name>
    <name type="common">Halobacterium halobium</name>
    <dbReference type="NCBI Taxonomy" id="64091"/>
    <lineage>
        <taxon>Archaea</taxon>
        <taxon>Methanobacteriati</taxon>
        <taxon>Methanobacteriota</taxon>
        <taxon>Stenosarchaea group</taxon>
        <taxon>Halobacteria</taxon>
        <taxon>Halobacteriales</taxon>
        <taxon>Halobacteriaceae</taxon>
        <taxon>Halobacterium</taxon>
        <taxon>Halobacterium salinarum NRC-34001</taxon>
    </lineage>
</organism>
<dbReference type="EC" id="7.6.2.8"/>
<dbReference type="EMBL" id="AE004437">
    <property type="protein sequence ID" value="AAG19699.1"/>
    <property type="status" value="ALT_INIT"/>
    <property type="molecule type" value="Genomic_DNA"/>
</dbReference>
<dbReference type="PIR" id="G84291">
    <property type="entry name" value="G84291"/>
</dbReference>
<dbReference type="RefSeq" id="WP_010902995.1">
    <property type="nucleotide sequence ID" value="NC_002607.1"/>
</dbReference>
<dbReference type="SMR" id="Q9HQ18"/>
<dbReference type="FunCoup" id="Q9HQ18">
    <property type="interactions" value="22"/>
</dbReference>
<dbReference type="STRING" id="64091.VNG_1371G"/>
<dbReference type="TCDB" id="3.A.1.14.9">
    <property type="family name" value="the atp-binding cassette (abc) superfamily"/>
</dbReference>
<dbReference type="PaxDb" id="64091-VNG_1371G"/>
<dbReference type="KEGG" id="hal:VNG_1371G"/>
<dbReference type="PATRIC" id="fig|64091.14.peg.1047"/>
<dbReference type="HOGENOM" id="CLU_000604_0_0_2"/>
<dbReference type="InParanoid" id="Q9HQ18"/>
<dbReference type="OrthoDB" id="24644at2157"/>
<dbReference type="PhylomeDB" id="Q9HQ18"/>
<dbReference type="Proteomes" id="UP000000554">
    <property type="component" value="Chromosome"/>
</dbReference>
<dbReference type="GO" id="GO:0005886">
    <property type="term" value="C:plasma membrane"/>
    <property type="evidence" value="ECO:0007669"/>
    <property type="project" value="UniProtKB-SubCell"/>
</dbReference>
<dbReference type="GO" id="GO:0015420">
    <property type="term" value="F:ABC-type vitamin B12 transporter activity"/>
    <property type="evidence" value="ECO:0007669"/>
    <property type="project" value="UniProtKB-EC"/>
</dbReference>
<dbReference type="GO" id="GO:0005524">
    <property type="term" value="F:ATP binding"/>
    <property type="evidence" value="ECO:0007669"/>
    <property type="project" value="UniProtKB-KW"/>
</dbReference>
<dbReference type="GO" id="GO:0016887">
    <property type="term" value="F:ATP hydrolysis activity"/>
    <property type="evidence" value="ECO:0007669"/>
    <property type="project" value="InterPro"/>
</dbReference>
<dbReference type="CDD" id="cd03214">
    <property type="entry name" value="ABC_Iron-Siderophores_B12_Hemin"/>
    <property type="match status" value="1"/>
</dbReference>
<dbReference type="FunFam" id="3.40.50.300:FF:000134">
    <property type="entry name" value="Iron-enterobactin ABC transporter ATP-binding protein"/>
    <property type="match status" value="1"/>
</dbReference>
<dbReference type="Gene3D" id="3.40.50.300">
    <property type="entry name" value="P-loop containing nucleotide triphosphate hydrolases"/>
    <property type="match status" value="1"/>
</dbReference>
<dbReference type="InterPro" id="IPR003593">
    <property type="entry name" value="AAA+_ATPase"/>
</dbReference>
<dbReference type="InterPro" id="IPR003439">
    <property type="entry name" value="ABC_transporter-like_ATP-bd"/>
</dbReference>
<dbReference type="InterPro" id="IPR017871">
    <property type="entry name" value="ABC_transporter-like_CS"/>
</dbReference>
<dbReference type="InterPro" id="IPR027417">
    <property type="entry name" value="P-loop_NTPase"/>
</dbReference>
<dbReference type="NCBIfam" id="NF007082">
    <property type="entry name" value="PRK09536.1"/>
    <property type="match status" value="1"/>
</dbReference>
<dbReference type="NCBIfam" id="NF010068">
    <property type="entry name" value="PRK13548.1"/>
    <property type="match status" value="1"/>
</dbReference>
<dbReference type="PANTHER" id="PTHR42794">
    <property type="entry name" value="HEMIN IMPORT ATP-BINDING PROTEIN HMUV"/>
    <property type="match status" value="1"/>
</dbReference>
<dbReference type="PANTHER" id="PTHR42794:SF1">
    <property type="entry name" value="HEMIN IMPORT ATP-BINDING PROTEIN HMUV"/>
    <property type="match status" value="1"/>
</dbReference>
<dbReference type="Pfam" id="PF00005">
    <property type="entry name" value="ABC_tran"/>
    <property type="match status" value="1"/>
</dbReference>
<dbReference type="SMART" id="SM00382">
    <property type="entry name" value="AAA"/>
    <property type="match status" value="1"/>
</dbReference>
<dbReference type="SUPFAM" id="SSF52540">
    <property type="entry name" value="P-loop containing nucleoside triphosphate hydrolases"/>
    <property type="match status" value="1"/>
</dbReference>
<dbReference type="PROSITE" id="PS00211">
    <property type="entry name" value="ABC_TRANSPORTER_1"/>
    <property type="match status" value="1"/>
</dbReference>
<dbReference type="PROSITE" id="PS50893">
    <property type="entry name" value="ABC_TRANSPORTER_2"/>
    <property type="match status" value="1"/>
</dbReference>
<comment type="function">
    <text evidence="3">Required for corrinoid utilization. Probably part of the ABC transporter complex BtuCDF involved in cobalamin (vitamin B12) import. Probably responsible for energy coupling to the transport system.</text>
</comment>
<comment type="catalytic activity">
    <reaction>
        <text>an R-cob(III)alamin(out) + ATP + H2O = an R-cob(III)alamin(in) + ADP + phosphate + H(+)</text>
        <dbReference type="Rhea" id="RHEA:17873"/>
        <dbReference type="ChEBI" id="CHEBI:15377"/>
        <dbReference type="ChEBI" id="CHEBI:15378"/>
        <dbReference type="ChEBI" id="CHEBI:30616"/>
        <dbReference type="ChEBI" id="CHEBI:43474"/>
        <dbReference type="ChEBI" id="CHEBI:140785"/>
        <dbReference type="ChEBI" id="CHEBI:456216"/>
        <dbReference type="EC" id="7.6.2.8"/>
    </reaction>
</comment>
<comment type="subunit">
    <text evidence="4">The complex is composed of two ATP-binding proteins (BtuD), two transmembrane proteins (BtuC) and a solute-binding protein (BtuF).</text>
</comment>
<comment type="subcellular location">
    <subcellularLocation>
        <location evidence="1">Cell membrane</location>
        <topology evidence="1">Peripheral membrane protein</topology>
    </subcellularLocation>
</comment>
<comment type="similarity">
    <text evidence="4">Belongs to the ABC transporter superfamily.</text>
</comment>
<comment type="sequence caution" evidence="4">
    <conflict type="erroneous initiation">
        <sequence resource="EMBL-CDS" id="AAG19699"/>
    </conflict>
    <text>Truncated N-terminus.</text>
</comment>
<name>BTUDA_HALSA</name>
<proteinExistence type="evidence at protein level"/>
<sequence>MTLDVTGLDVELAGTRILDDVHASIRDGHLVGVVGPNGAGKSTLLRAMNGLITPTAGTVLVAGDDVHALSSAAASRRIATVPQDASVSFEFTVRQVVEMGRHPHTTRFGTDTDTAVVDRAMARTGVAQFAARDVTSLSGGERQRVLLARALAQAAPVLLLDEPTASLDVNHQIRTLEVVRDLADSEDRAVVAAIHDLDLAARYCDELVVVADGRVHDAGAPRSVLTPDTIRAAFDARVAVGTDPATGAVTVTPLPDRTSAAADTSVHVVGGGDSATPVVRRLVSAGASVSVGPVVEGDTDHETARRVGCPCTSVAPFTRLEDTTAASATRADIAAADVIAVPVAAAARPGVRGLLTGAVPTLAVGDAAGAPEWADRLVACDAVVSAVGALADTPSDGV</sequence>
<evidence type="ECO:0000250" key="1"/>
<evidence type="ECO:0000255" key="2">
    <source>
        <dbReference type="PROSITE-ProRule" id="PRU00434"/>
    </source>
</evidence>
<evidence type="ECO:0000269" key="3">
    <source>
    </source>
</evidence>
<evidence type="ECO:0000305" key="4"/>